<evidence type="ECO:0000255" key="1">
    <source>
        <dbReference type="HAMAP-Rule" id="MF_01515"/>
    </source>
</evidence>
<protein>
    <recommendedName>
        <fullName evidence="1">UPF0316 protein SAUSA300_1892</fullName>
    </recommendedName>
</protein>
<feature type="chain" id="PRO_0000250352" description="UPF0316 protein SAUSA300_1892">
    <location>
        <begin position="1"/>
        <end position="200"/>
    </location>
</feature>
<feature type="transmembrane region" description="Helical" evidence="1">
    <location>
        <begin position="8"/>
        <end position="28"/>
    </location>
</feature>
<feature type="transmembrane region" description="Helical" evidence="1">
    <location>
        <begin position="40"/>
        <end position="60"/>
    </location>
</feature>
<feature type="transmembrane region" description="Helical" evidence="1">
    <location>
        <begin position="66"/>
        <end position="86"/>
    </location>
</feature>
<reference key="1">
    <citation type="journal article" date="2006" name="Lancet">
        <title>Complete genome sequence of USA300, an epidemic clone of community-acquired meticillin-resistant Staphylococcus aureus.</title>
        <authorList>
            <person name="Diep B.A."/>
            <person name="Gill S.R."/>
            <person name="Chang R.F."/>
            <person name="Phan T.H."/>
            <person name="Chen J.H."/>
            <person name="Davidson M.G."/>
            <person name="Lin F."/>
            <person name="Lin J."/>
            <person name="Carleton H.A."/>
            <person name="Mongodin E.F."/>
            <person name="Sensabaugh G.F."/>
            <person name="Perdreau-Remington F."/>
        </authorList>
    </citation>
    <scope>NUCLEOTIDE SEQUENCE [LARGE SCALE GENOMIC DNA]</scope>
    <source>
        <strain>USA300</strain>
    </source>
</reference>
<gene>
    <name type="ordered locus">SAUSA300_1892</name>
</gene>
<organism>
    <name type="scientific">Staphylococcus aureus (strain USA300)</name>
    <dbReference type="NCBI Taxonomy" id="367830"/>
    <lineage>
        <taxon>Bacteria</taxon>
        <taxon>Bacillati</taxon>
        <taxon>Bacillota</taxon>
        <taxon>Bacilli</taxon>
        <taxon>Bacillales</taxon>
        <taxon>Staphylococcaceae</taxon>
        <taxon>Staphylococcus</taxon>
    </lineage>
</organism>
<proteinExistence type="inferred from homology"/>
<accession>Q2FFI4</accession>
<name>Y1892_STAA3</name>
<keyword id="KW-1003">Cell membrane</keyword>
<keyword id="KW-0472">Membrane</keyword>
<keyword id="KW-0812">Transmembrane</keyword>
<keyword id="KW-1133">Transmembrane helix</keyword>
<comment type="subcellular location">
    <subcellularLocation>
        <location evidence="1">Cell membrane</location>
        <topology evidence="1">Multi-pass membrane protein</topology>
    </subcellularLocation>
</comment>
<comment type="similarity">
    <text evidence="1">Belongs to the UPF0316 family.</text>
</comment>
<dbReference type="EMBL" id="CP000255">
    <property type="protein sequence ID" value="ABD22072.1"/>
    <property type="molecule type" value="Genomic_DNA"/>
</dbReference>
<dbReference type="RefSeq" id="WP_000011538.1">
    <property type="nucleotide sequence ID" value="NZ_CP027476.1"/>
</dbReference>
<dbReference type="SMR" id="Q2FFI4"/>
<dbReference type="KEGG" id="saa:SAUSA300_1892"/>
<dbReference type="HOGENOM" id="CLU_106166_1_0_9"/>
<dbReference type="OMA" id="FWVKAVK"/>
<dbReference type="Proteomes" id="UP000001939">
    <property type="component" value="Chromosome"/>
</dbReference>
<dbReference type="GO" id="GO:0005886">
    <property type="term" value="C:plasma membrane"/>
    <property type="evidence" value="ECO:0007669"/>
    <property type="project" value="UniProtKB-SubCell"/>
</dbReference>
<dbReference type="CDD" id="cd16381">
    <property type="entry name" value="YitT_C_like_1"/>
    <property type="match status" value="1"/>
</dbReference>
<dbReference type="HAMAP" id="MF_01515">
    <property type="entry name" value="UPF0316"/>
    <property type="match status" value="1"/>
</dbReference>
<dbReference type="InterPro" id="IPR019264">
    <property type="entry name" value="DUF2179"/>
</dbReference>
<dbReference type="InterPro" id="IPR044035">
    <property type="entry name" value="DUF5698"/>
</dbReference>
<dbReference type="InterPro" id="IPR022930">
    <property type="entry name" value="UPF0316"/>
</dbReference>
<dbReference type="NCBIfam" id="NF003190">
    <property type="entry name" value="PRK04164.1-1"/>
    <property type="match status" value="1"/>
</dbReference>
<dbReference type="NCBIfam" id="NF003194">
    <property type="entry name" value="PRK04164.1-5"/>
    <property type="match status" value="1"/>
</dbReference>
<dbReference type="PANTHER" id="PTHR40060">
    <property type="entry name" value="UPF0316 PROTEIN YEBE"/>
    <property type="match status" value="1"/>
</dbReference>
<dbReference type="PANTHER" id="PTHR40060:SF1">
    <property type="entry name" value="UPF0316 PROTEIN YEBE"/>
    <property type="match status" value="1"/>
</dbReference>
<dbReference type="Pfam" id="PF10035">
    <property type="entry name" value="DUF2179"/>
    <property type="match status" value="1"/>
</dbReference>
<dbReference type="Pfam" id="PF18955">
    <property type="entry name" value="DUF5698"/>
    <property type="match status" value="1"/>
</dbReference>
<sequence length="200" mass="22969">MSFVTENPWLMVLTIFIINICYVTFLTMRTILTLKGYRYIAASVSFLEVLVYIVGLGLVMSNLDHIQNIIAYAFGFSIGIIVGMKIEEKLALGYTVVNVTSAEYELDLPNELRNLGYGVTHYAAFGRDGSRMVMQILTPRKYERKLMDTIKNLDPKAFIIAYEPRNIHGGFWTKGIRRRKLKDYEPEELESVVEHEIQSK</sequence>